<feature type="chain" id="PRO_0000348817" description="tRNA-cytidine(32) 2-sulfurtransferase">
    <location>
        <begin position="1"/>
        <end position="294"/>
    </location>
</feature>
<feature type="short sequence motif" description="PP-loop motif" evidence="1">
    <location>
        <begin position="70"/>
        <end position="75"/>
    </location>
</feature>
<feature type="binding site" evidence="1">
    <location>
        <position position="145"/>
    </location>
    <ligand>
        <name>[4Fe-4S] cluster</name>
        <dbReference type="ChEBI" id="CHEBI:49883"/>
    </ligand>
</feature>
<feature type="binding site" evidence="1">
    <location>
        <position position="148"/>
    </location>
    <ligand>
        <name>[4Fe-4S] cluster</name>
        <dbReference type="ChEBI" id="CHEBI:49883"/>
    </ligand>
</feature>
<feature type="binding site" evidence="1">
    <location>
        <position position="236"/>
    </location>
    <ligand>
        <name>[4Fe-4S] cluster</name>
        <dbReference type="ChEBI" id="CHEBI:49883"/>
    </ligand>
</feature>
<gene>
    <name evidence="1" type="primary">ttcA</name>
    <name type="ordered locus">R01785</name>
    <name type="ORF">SMc00534</name>
</gene>
<protein>
    <recommendedName>
        <fullName evidence="1">tRNA-cytidine(32) 2-sulfurtransferase</fullName>
        <ecNumber evidence="1">2.8.1.-</ecNumber>
    </recommendedName>
    <alternativeName>
        <fullName evidence="1">Two-thiocytidine biosynthesis protein A</fullName>
    </alternativeName>
    <alternativeName>
        <fullName evidence="1">tRNA 2-thiocytidine biosynthesis protein TtcA</fullName>
    </alternativeName>
</protein>
<organism>
    <name type="scientific">Rhizobium meliloti (strain 1021)</name>
    <name type="common">Ensifer meliloti</name>
    <name type="synonym">Sinorhizobium meliloti</name>
    <dbReference type="NCBI Taxonomy" id="266834"/>
    <lineage>
        <taxon>Bacteria</taxon>
        <taxon>Pseudomonadati</taxon>
        <taxon>Pseudomonadota</taxon>
        <taxon>Alphaproteobacteria</taxon>
        <taxon>Hyphomicrobiales</taxon>
        <taxon>Rhizobiaceae</taxon>
        <taxon>Sinorhizobium/Ensifer group</taxon>
        <taxon>Sinorhizobium</taxon>
    </lineage>
</organism>
<accession>Q92PH1</accession>
<sequence length="294" mass="32950">MELAQSSPDETDSVIVDDAAFEGAAHPLFSRMPSSVSFNKLRKRLLRQVRQALDDFGMLKGSRRWLVGVSGGKDSYSLLALLMDLQWRGLLPVELVACNLDQGQPNFPKHVLPDYLRSIGVKHRIEYRDTYSIVKEKVPAGATYCSLCSRLRRGNLYRIGREEGCDALVLGHHREDILETFFMNFFHGGRLASMPAKLLNDEGDLTVLRPLAYAAEDDLAKFAAAMEFPIIPCDLCGSQDGLERNAMKAMLADIERRMPGRKDTMLRALGHVNASHLLDPKLFDFQSLSPEPKE</sequence>
<keyword id="KW-0004">4Fe-4S</keyword>
<keyword id="KW-0067">ATP-binding</keyword>
<keyword id="KW-0963">Cytoplasm</keyword>
<keyword id="KW-0408">Iron</keyword>
<keyword id="KW-0411">Iron-sulfur</keyword>
<keyword id="KW-0460">Magnesium</keyword>
<keyword id="KW-0479">Metal-binding</keyword>
<keyword id="KW-0547">Nucleotide-binding</keyword>
<keyword id="KW-1185">Reference proteome</keyword>
<keyword id="KW-0694">RNA-binding</keyword>
<keyword id="KW-0808">Transferase</keyword>
<keyword id="KW-0819">tRNA processing</keyword>
<keyword id="KW-0820">tRNA-binding</keyword>
<proteinExistence type="inferred from homology"/>
<name>TTCA_RHIME</name>
<dbReference type="EC" id="2.8.1.-" evidence="1"/>
<dbReference type="EMBL" id="AL591688">
    <property type="protein sequence ID" value="CAC46364.1"/>
    <property type="status" value="ALT_INIT"/>
    <property type="molecule type" value="Genomic_DNA"/>
</dbReference>
<dbReference type="RefSeq" id="NP_385891.1">
    <property type="nucleotide sequence ID" value="NC_003047.1"/>
</dbReference>
<dbReference type="RefSeq" id="WP_013844495.1">
    <property type="nucleotide sequence ID" value="NC_003047.1"/>
</dbReference>
<dbReference type="SMR" id="Q92PH1"/>
<dbReference type="EnsemblBacteria" id="CAC46364">
    <property type="protein sequence ID" value="CAC46364"/>
    <property type="gene ID" value="SMc00534"/>
</dbReference>
<dbReference type="KEGG" id="sme:SMc00534"/>
<dbReference type="PATRIC" id="fig|266834.11.peg.3225"/>
<dbReference type="eggNOG" id="COG0037">
    <property type="taxonomic scope" value="Bacteria"/>
</dbReference>
<dbReference type="HOGENOM" id="CLU_026481_0_0_5"/>
<dbReference type="OrthoDB" id="9801054at2"/>
<dbReference type="Proteomes" id="UP000001976">
    <property type="component" value="Chromosome"/>
</dbReference>
<dbReference type="GO" id="GO:0005737">
    <property type="term" value="C:cytoplasm"/>
    <property type="evidence" value="ECO:0007669"/>
    <property type="project" value="UniProtKB-SubCell"/>
</dbReference>
<dbReference type="GO" id="GO:0051539">
    <property type="term" value="F:4 iron, 4 sulfur cluster binding"/>
    <property type="evidence" value="ECO:0007669"/>
    <property type="project" value="UniProtKB-UniRule"/>
</dbReference>
<dbReference type="GO" id="GO:0005524">
    <property type="term" value="F:ATP binding"/>
    <property type="evidence" value="ECO:0007669"/>
    <property type="project" value="UniProtKB-UniRule"/>
</dbReference>
<dbReference type="GO" id="GO:0000287">
    <property type="term" value="F:magnesium ion binding"/>
    <property type="evidence" value="ECO:0007669"/>
    <property type="project" value="UniProtKB-UniRule"/>
</dbReference>
<dbReference type="GO" id="GO:0016783">
    <property type="term" value="F:sulfurtransferase activity"/>
    <property type="evidence" value="ECO:0007669"/>
    <property type="project" value="UniProtKB-UniRule"/>
</dbReference>
<dbReference type="GO" id="GO:0000049">
    <property type="term" value="F:tRNA binding"/>
    <property type="evidence" value="ECO:0007669"/>
    <property type="project" value="UniProtKB-KW"/>
</dbReference>
<dbReference type="GO" id="GO:0034227">
    <property type="term" value="P:tRNA thio-modification"/>
    <property type="evidence" value="ECO:0007669"/>
    <property type="project" value="UniProtKB-UniRule"/>
</dbReference>
<dbReference type="CDD" id="cd24138">
    <property type="entry name" value="TtcA-like"/>
    <property type="match status" value="1"/>
</dbReference>
<dbReference type="Gene3D" id="3.40.50.620">
    <property type="entry name" value="HUPs"/>
    <property type="match status" value="1"/>
</dbReference>
<dbReference type="HAMAP" id="MF_01850">
    <property type="entry name" value="TtcA"/>
    <property type="match status" value="1"/>
</dbReference>
<dbReference type="InterPro" id="IPR014729">
    <property type="entry name" value="Rossmann-like_a/b/a_fold"/>
</dbReference>
<dbReference type="InterPro" id="IPR011063">
    <property type="entry name" value="TilS/TtcA_N"/>
</dbReference>
<dbReference type="InterPro" id="IPR012089">
    <property type="entry name" value="tRNA_Cyd_32_2_STrfase"/>
</dbReference>
<dbReference type="InterPro" id="IPR035107">
    <property type="entry name" value="tRNA_thiolation_TtcA_Ctu1"/>
</dbReference>
<dbReference type="NCBIfam" id="NF007972">
    <property type="entry name" value="PRK10696.1"/>
    <property type="match status" value="1"/>
</dbReference>
<dbReference type="PANTHER" id="PTHR43686:SF1">
    <property type="entry name" value="AMINOTRAN_5 DOMAIN-CONTAINING PROTEIN"/>
    <property type="match status" value="1"/>
</dbReference>
<dbReference type="PANTHER" id="PTHR43686">
    <property type="entry name" value="SULFURTRANSFERASE-RELATED"/>
    <property type="match status" value="1"/>
</dbReference>
<dbReference type="Pfam" id="PF01171">
    <property type="entry name" value="ATP_bind_3"/>
    <property type="match status" value="1"/>
</dbReference>
<dbReference type="PIRSF" id="PIRSF004976">
    <property type="entry name" value="ATPase_YdaO"/>
    <property type="match status" value="1"/>
</dbReference>
<dbReference type="SUPFAM" id="SSF52402">
    <property type="entry name" value="Adenine nucleotide alpha hydrolases-like"/>
    <property type="match status" value="1"/>
</dbReference>
<evidence type="ECO:0000255" key="1">
    <source>
        <dbReference type="HAMAP-Rule" id="MF_01850"/>
    </source>
</evidence>
<evidence type="ECO:0000305" key="2"/>
<reference key="1">
    <citation type="journal article" date="2001" name="Proc. Natl. Acad. Sci. U.S.A.">
        <title>Analysis of the chromosome sequence of the legume symbiont Sinorhizobium meliloti strain 1021.</title>
        <authorList>
            <person name="Capela D."/>
            <person name="Barloy-Hubler F."/>
            <person name="Gouzy J."/>
            <person name="Bothe G."/>
            <person name="Ampe F."/>
            <person name="Batut J."/>
            <person name="Boistard P."/>
            <person name="Becker A."/>
            <person name="Boutry M."/>
            <person name="Cadieu E."/>
            <person name="Dreano S."/>
            <person name="Gloux S."/>
            <person name="Godrie T."/>
            <person name="Goffeau A."/>
            <person name="Kahn D."/>
            <person name="Kiss E."/>
            <person name="Lelaure V."/>
            <person name="Masuy D."/>
            <person name="Pohl T."/>
            <person name="Portetelle D."/>
            <person name="Puehler A."/>
            <person name="Purnelle B."/>
            <person name="Ramsperger U."/>
            <person name="Renard C."/>
            <person name="Thebault P."/>
            <person name="Vandenbol M."/>
            <person name="Weidner S."/>
            <person name="Galibert F."/>
        </authorList>
    </citation>
    <scope>NUCLEOTIDE SEQUENCE [LARGE SCALE GENOMIC DNA]</scope>
    <source>
        <strain>1021</strain>
    </source>
</reference>
<reference key="2">
    <citation type="journal article" date="2001" name="Science">
        <title>The composite genome of the legume symbiont Sinorhizobium meliloti.</title>
        <authorList>
            <person name="Galibert F."/>
            <person name="Finan T.M."/>
            <person name="Long S.R."/>
            <person name="Puehler A."/>
            <person name="Abola P."/>
            <person name="Ampe F."/>
            <person name="Barloy-Hubler F."/>
            <person name="Barnett M.J."/>
            <person name="Becker A."/>
            <person name="Boistard P."/>
            <person name="Bothe G."/>
            <person name="Boutry M."/>
            <person name="Bowser L."/>
            <person name="Buhrmester J."/>
            <person name="Cadieu E."/>
            <person name="Capela D."/>
            <person name="Chain P."/>
            <person name="Cowie A."/>
            <person name="Davis R.W."/>
            <person name="Dreano S."/>
            <person name="Federspiel N.A."/>
            <person name="Fisher R.F."/>
            <person name="Gloux S."/>
            <person name="Godrie T."/>
            <person name="Goffeau A."/>
            <person name="Golding B."/>
            <person name="Gouzy J."/>
            <person name="Gurjal M."/>
            <person name="Hernandez-Lucas I."/>
            <person name="Hong A."/>
            <person name="Huizar L."/>
            <person name="Hyman R.W."/>
            <person name="Jones T."/>
            <person name="Kahn D."/>
            <person name="Kahn M.L."/>
            <person name="Kalman S."/>
            <person name="Keating D.H."/>
            <person name="Kiss E."/>
            <person name="Komp C."/>
            <person name="Lelaure V."/>
            <person name="Masuy D."/>
            <person name="Palm C."/>
            <person name="Peck M.C."/>
            <person name="Pohl T.M."/>
            <person name="Portetelle D."/>
            <person name="Purnelle B."/>
            <person name="Ramsperger U."/>
            <person name="Surzycki R."/>
            <person name="Thebault P."/>
            <person name="Vandenbol M."/>
            <person name="Vorhoelter F.J."/>
            <person name="Weidner S."/>
            <person name="Wells D.H."/>
            <person name="Wong K."/>
            <person name="Yeh K.-C."/>
            <person name="Batut J."/>
        </authorList>
    </citation>
    <scope>NUCLEOTIDE SEQUENCE [LARGE SCALE GENOMIC DNA]</scope>
    <source>
        <strain>1021</strain>
    </source>
</reference>
<comment type="function">
    <text evidence="1">Catalyzes the ATP-dependent 2-thiolation of cytidine in position 32 of tRNA, to form 2-thiocytidine (s(2)C32). The sulfur atoms are provided by the cysteine/cysteine desulfurase (IscS) system.</text>
</comment>
<comment type="catalytic activity">
    <reaction evidence="1">
        <text>cytidine(32) in tRNA + S-sulfanyl-L-cysteinyl-[cysteine desulfurase] + AH2 + ATP = 2-thiocytidine(32) in tRNA + L-cysteinyl-[cysteine desulfurase] + A + AMP + diphosphate + H(+)</text>
        <dbReference type="Rhea" id="RHEA:57048"/>
        <dbReference type="Rhea" id="RHEA-COMP:10288"/>
        <dbReference type="Rhea" id="RHEA-COMP:12157"/>
        <dbReference type="Rhea" id="RHEA-COMP:12158"/>
        <dbReference type="Rhea" id="RHEA-COMP:14821"/>
        <dbReference type="ChEBI" id="CHEBI:13193"/>
        <dbReference type="ChEBI" id="CHEBI:15378"/>
        <dbReference type="ChEBI" id="CHEBI:17499"/>
        <dbReference type="ChEBI" id="CHEBI:29950"/>
        <dbReference type="ChEBI" id="CHEBI:30616"/>
        <dbReference type="ChEBI" id="CHEBI:33019"/>
        <dbReference type="ChEBI" id="CHEBI:61963"/>
        <dbReference type="ChEBI" id="CHEBI:82748"/>
        <dbReference type="ChEBI" id="CHEBI:141453"/>
        <dbReference type="ChEBI" id="CHEBI:456215"/>
    </reaction>
    <physiologicalReaction direction="left-to-right" evidence="1">
        <dbReference type="Rhea" id="RHEA:57049"/>
    </physiologicalReaction>
</comment>
<comment type="cofactor">
    <cofactor evidence="1">
        <name>Mg(2+)</name>
        <dbReference type="ChEBI" id="CHEBI:18420"/>
    </cofactor>
</comment>
<comment type="cofactor">
    <cofactor evidence="1">
        <name>[4Fe-4S] cluster</name>
        <dbReference type="ChEBI" id="CHEBI:49883"/>
    </cofactor>
    <text evidence="1">Binds 1 [4Fe-4S] cluster per subunit. The cluster is chelated by three Cys residues, the fourth Fe has a free coordination site that may bind a sulfur atom transferred from the persulfide of IscS.</text>
</comment>
<comment type="pathway">
    <text evidence="1">tRNA modification.</text>
</comment>
<comment type="subunit">
    <text evidence="1">Homodimer.</text>
</comment>
<comment type="subcellular location">
    <subcellularLocation>
        <location evidence="1">Cytoplasm</location>
    </subcellularLocation>
</comment>
<comment type="miscellaneous">
    <text evidence="1">The thiolation reaction likely consists of two steps: a first activation step by ATP to form an adenylated intermediate of the target base of tRNA, and a second nucleophilic substitution step of the sulfur (S) atom supplied by the hydrosulfide attached to the Fe-S cluster.</text>
</comment>
<comment type="similarity">
    <text evidence="1">Belongs to the TtcA family.</text>
</comment>
<comment type="sequence caution" evidence="2">
    <conflict type="erroneous initiation">
        <sequence resource="EMBL-CDS" id="CAC46364"/>
    </conflict>
    <text>Extended N-terminus.</text>
</comment>